<name>RL27_LACDB</name>
<keyword id="KW-0687">Ribonucleoprotein</keyword>
<keyword id="KW-0689">Ribosomal protein</keyword>
<comment type="similarity">
    <text evidence="1">Belongs to the bacterial ribosomal protein bL27 family.</text>
</comment>
<feature type="chain" id="PRO_1000061047" description="Large ribosomal subunit protein bL27">
    <location>
        <begin position="1"/>
        <end position="99"/>
    </location>
</feature>
<feature type="region of interest" description="Disordered" evidence="2">
    <location>
        <begin position="13"/>
        <end position="65"/>
    </location>
</feature>
<dbReference type="EMBL" id="CP000412">
    <property type="protein sequence ID" value="ABJ58847.1"/>
    <property type="molecule type" value="Genomic_DNA"/>
</dbReference>
<dbReference type="SMR" id="Q049M5"/>
<dbReference type="KEGG" id="lbu:LBUL_1325"/>
<dbReference type="HOGENOM" id="CLU_095424_4_0_9"/>
<dbReference type="GO" id="GO:0022625">
    <property type="term" value="C:cytosolic large ribosomal subunit"/>
    <property type="evidence" value="ECO:0007669"/>
    <property type="project" value="TreeGrafter"/>
</dbReference>
<dbReference type="GO" id="GO:0003735">
    <property type="term" value="F:structural constituent of ribosome"/>
    <property type="evidence" value="ECO:0007669"/>
    <property type="project" value="InterPro"/>
</dbReference>
<dbReference type="GO" id="GO:0006412">
    <property type="term" value="P:translation"/>
    <property type="evidence" value="ECO:0007669"/>
    <property type="project" value="UniProtKB-UniRule"/>
</dbReference>
<dbReference type="FunFam" id="2.40.50.100:FF:000004">
    <property type="entry name" value="50S ribosomal protein L27"/>
    <property type="match status" value="1"/>
</dbReference>
<dbReference type="Gene3D" id="2.40.50.100">
    <property type="match status" value="1"/>
</dbReference>
<dbReference type="HAMAP" id="MF_00539">
    <property type="entry name" value="Ribosomal_bL27"/>
    <property type="match status" value="1"/>
</dbReference>
<dbReference type="InterPro" id="IPR001684">
    <property type="entry name" value="Ribosomal_bL27"/>
</dbReference>
<dbReference type="InterPro" id="IPR018261">
    <property type="entry name" value="Ribosomal_bL27_CS"/>
</dbReference>
<dbReference type="NCBIfam" id="TIGR00062">
    <property type="entry name" value="L27"/>
    <property type="match status" value="1"/>
</dbReference>
<dbReference type="PANTHER" id="PTHR15893:SF0">
    <property type="entry name" value="LARGE RIBOSOMAL SUBUNIT PROTEIN BL27M"/>
    <property type="match status" value="1"/>
</dbReference>
<dbReference type="PANTHER" id="PTHR15893">
    <property type="entry name" value="RIBOSOMAL PROTEIN L27"/>
    <property type="match status" value="1"/>
</dbReference>
<dbReference type="Pfam" id="PF01016">
    <property type="entry name" value="Ribosomal_L27"/>
    <property type="match status" value="1"/>
</dbReference>
<dbReference type="PRINTS" id="PR00063">
    <property type="entry name" value="RIBOSOMALL27"/>
</dbReference>
<dbReference type="SUPFAM" id="SSF110324">
    <property type="entry name" value="Ribosomal L27 protein-like"/>
    <property type="match status" value="1"/>
</dbReference>
<dbReference type="PROSITE" id="PS00831">
    <property type="entry name" value="RIBOSOMAL_L27"/>
    <property type="match status" value="1"/>
</dbReference>
<proteinExistence type="inferred from homology"/>
<accession>Q049M5</accession>
<gene>
    <name evidence="1" type="primary">rpmA</name>
    <name type="ordered locus">LBUL_1325</name>
</gene>
<protein>
    <recommendedName>
        <fullName evidence="1">Large ribosomal subunit protein bL27</fullName>
    </recommendedName>
    <alternativeName>
        <fullName evidence="3">50S ribosomal protein L27</fullName>
    </alternativeName>
</protein>
<evidence type="ECO:0000255" key="1">
    <source>
        <dbReference type="HAMAP-Rule" id="MF_00539"/>
    </source>
</evidence>
<evidence type="ECO:0000256" key="2">
    <source>
        <dbReference type="SAM" id="MobiDB-lite"/>
    </source>
</evidence>
<evidence type="ECO:0000305" key="3"/>
<organism>
    <name type="scientific">Lactobacillus delbrueckii subsp. bulgaricus (strain ATCC BAA-365 / Lb-18)</name>
    <dbReference type="NCBI Taxonomy" id="321956"/>
    <lineage>
        <taxon>Bacteria</taxon>
        <taxon>Bacillati</taxon>
        <taxon>Bacillota</taxon>
        <taxon>Bacilli</taxon>
        <taxon>Lactobacillales</taxon>
        <taxon>Lactobacillaceae</taxon>
        <taxon>Lactobacillus</taxon>
    </lineage>
</organism>
<reference key="1">
    <citation type="journal article" date="2006" name="Proc. Natl. Acad. Sci. U.S.A.">
        <title>Comparative genomics of the lactic acid bacteria.</title>
        <authorList>
            <person name="Makarova K.S."/>
            <person name="Slesarev A."/>
            <person name="Wolf Y.I."/>
            <person name="Sorokin A."/>
            <person name="Mirkin B."/>
            <person name="Koonin E.V."/>
            <person name="Pavlov A."/>
            <person name="Pavlova N."/>
            <person name="Karamychev V."/>
            <person name="Polouchine N."/>
            <person name="Shakhova V."/>
            <person name="Grigoriev I."/>
            <person name="Lou Y."/>
            <person name="Rohksar D."/>
            <person name="Lucas S."/>
            <person name="Huang K."/>
            <person name="Goodstein D.M."/>
            <person name="Hawkins T."/>
            <person name="Plengvidhya V."/>
            <person name="Welker D."/>
            <person name="Hughes J."/>
            <person name="Goh Y."/>
            <person name="Benson A."/>
            <person name="Baldwin K."/>
            <person name="Lee J.-H."/>
            <person name="Diaz-Muniz I."/>
            <person name="Dosti B."/>
            <person name="Smeianov V."/>
            <person name="Wechter W."/>
            <person name="Barabote R."/>
            <person name="Lorca G."/>
            <person name="Altermann E."/>
            <person name="Barrangou R."/>
            <person name="Ganesan B."/>
            <person name="Xie Y."/>
            <person name="Rawsthorne H."/>
            <person name="Tamir D."/>
            <person name="Parker C."/>
            <person name="Breidt F."/>
            <person name="Broadbent J.R."/>
            <person name="Hutkins R."/>
            <person name="O'Sullivan D."/>
            <person name="Steele J."/>
            <person name="Unlu G."/>
            <person name="Saier M.H. Jr."/>
            <person name="Klaenhammer T."/>
            <person name="Richardson P."/>
            <person name="Kozyavkin S."/>
            <person name="Weimer B.C."/>
            <person name="Mills D.A."/>
        </authorList>
    </citation>
    <scope>NUCLEOTIDE SEQUENCE [LARGE SCALE GENOMIC DNA]</scope>
    <source>
        <strain>ATCC BAA-365 / Lb-18</strain>
    </source>
</reference>
<sequence>MMMNILSNAKLLAHHKGGGSTTNGRNSAGRRLGAKRADGQEVHAGSIIYRQRGTKIHPGKNVGRGGDDTLFALTNGVVKFERLGKYKKQVSVLPVEDAE</sequence>